<name>YB221_YEAST</name>
<organism>
    <name type="scientific">Saccharomyces cerevisiae (strain ATCC 204508 / S288c)</name>
    <name type="common">Baker's yeast</name>
    <dbReference type="NCBI Taxonomy" id="559292"/>
    <lineage>
        <taxon>Eukaryota</taxon>
        <taxon>Fungi</taxon>
        <taxon>Dikarya</taxon>
        <taxon>Ascomycota</taxon>
        <taxon>Saccharomycotina</taxon>
        <taxon>Saccharomycetes</taxon>
        <taxon>Saccharomycetales</taxon>
        <taxon>Saccharomycetaceae</taxon>
        <taxon>Saccharomyces</taxon>
    </lineage>
</organism>
<dbReference type="EMBL" id="Z36090">
    <property type="status" value="NOT_ANNOTATED_CDS"/>
    <property type="molecule type" value="Genomic_DNA"/>
</dbReference>
<dbReference type="EMBL" id="BK006936">
    <property type="protein sequence ID" value="DAA07338.1"/>
    <property type="molecule type" value="Genomic_DNA"/>
</dbReference>
<dbReference type="RefSeq" id="NP_878054.1">
    <property type="nucleotide sequence ID" value="NM_001184644.1"/>
</dbReference>
<dbReference type="BioGRID" id="36992">
    <property type="interactions" value="88"/>
</dbReference>
<dbReference type="FunCoup" id="Q3E781">
    <property type="interactions" value="3"/>
</dbReference>
<dbReference type="STRING" id="4932.YBR221W-A"/>
<dbReference type="PaxDb" id="4932-YBR221W-A"/>
<dbReference type="EnsemblFungi" id="YBR221W-A_mRNA">
    <property type="protein sequence ID" value="YBR221W-A"/>
    <property type="gene ID" value="YBR221W-A"/>
</dbReference>
<dbReference type="GeneID" id="1466450"/>
<dbReference type="KEGG" id="sce:YBR221W-A"/>
<dbReference type="AGR" id="SGD:S000028817"/>
<dbReference type="SGD" id="S000028817">
    <property type="gene designation" value="YBR221W-A"/>
</dbReference>
<dbReference type="VEuPathDB" id="FungiDB:YBR221W-A"/>
<dbReference type="HOGENOM" id="CLU_3377402_0_0_1"/>
<dbReference type="InParanoid" id="Q3E781"/>
<dbReference type="BioCyc" id="YEAST:G3O-29269-MONOMER"/>
<dbReference type="BioGRID-ORCS" id="1466450">
    <property type="hits" value="0 hits in 10 CRISPR screens"/>
</dbReference>
<dbReference type="PRO" id="PR:Q3E781"/>
<dbReference type="Proteomes" id="UP000002311">
    <property type="component" value="Chromosome II"/>
</dbReference>
<keyword id="KW-1185">Reference proteome</keyword>
<accession>Q3E781</accession>
<accession>D6VQL8</accession>
<feature type="chain" id="PRO_0000248442" description="Uncharacterized protein YBR221W-A">
    <location>
        <begin position="1"/>
        <end position="34"/>
    </location>
</feature>
<feature type="region of interest" description="Disordered" evidence="1">
    <location>
        <begin position="1"/>
        <end position="21"/>
    </location>
</feature>
<feature type="compositionally biased region" description="Basic and acidic residues" evidence="1">
    <location>
        <begin position="1"/>
        <end position="12"/>
    </location>
</feature>
<sequence length="34" mass="4086">MFSHFEVSENRPRKQPRRKRISLGMINTVVSLDR</sequence>
<evidence type="ECO:0000256" key="1">
    <source>
        <dbReference type="SAM" id="MobiDB-lite"/>
    </source>
</evidence>
<reference key="1">
    <citation type="journal article" date="1994" name="EMBO J.">
        <title>Complete DNA sequence of yeast chromosome II.</title>
        <authorList>
            <person name="Feldmann H."/>
            <person name="Aigle M."/>
            <person name="Aljinovic G."/>
            <person name="Andre B."/>
            <person name="Baclet M.C."/>
            <person name="Barthe C."/>
            <person name="Baur A."/>
            <person name="Becam A.-M."/>
            <person name="Biteau N."/>
            <person name="Boles E."/>
            <person name="Brandt T."/>
            <person name="Brendel M."/>
            <person name="Brueckner M."/>
            <person name="Bussereau F."/>
            <person name="Christiansen C."/>
            <person name="Contreras R."/>
            <person name="Crouzet M."/>
            <person name="Cziepluch C."/>
            <person name="Demolis N."/>
            <person name="Delaveau T."/>
            <person name="Doignon F."/>
            <person name="Domdey H."/>
            <person name="Duesterhus S."/>
            <person name="Dubois E."/>
            <person name="Dujon B."/>
            <person name="El Bakkoury M."/>
            <person name="Entian K.-D."/>
            <person name="Feuermann M."/>
            <person name="Fiers W."/>
            <person name="Fobo G.M."/>
            <person name="Fritz C."/>
            <person name="Gassenhuber J."/>
            <person name="Glansdorff N."/>
            <person name="Goffeau A."/>
            <person name="Grivell L.A."/>
            <person name="de Haan M."/>
            <person name="Hein C."/>
            <person name="Herbert C.J."/>
            <person name="Hollenberg C.P."/>
            <person name="Holmstroem K."/>
            <person name="Jacq C."/>
            <person name="Jacquet M."/>
            <person name="Jauniaux J.-C."/>
            <person name="Jonniaux J.-L."/>
            <person name="Kallesoee T."/>
            <person name="Kiesau P."/>
            <person name="Kirchrath L."/>
            <person name="Koetter P."/>
            <person name="Korol S."/>
            <person name="Liebl S."/>
            <person name="Logghe M."/>
            <person name="Lohan A.J.E."/>
            <person name="Louis E.J."/>
            <person name="Li Z.Y."/>
            <person name="Maat M.J."/>
            <person name="Mallet L."/>
            <person name="Mannhaupt G."/>
            <person name="Messenguy F."/>
            <person name="Miosga T."/>
            <person name="Molemans F."/>
            <person name="Mueller S."/>
            <person name="Nasr F."/>
            <person name="Obermaier B."/>
            <person name="Perea J."/>
            <person name="Pierard A."/>
            <person name="Piravandi E."/>
            <person name="Pohl F.M."/>
            <person name="Pohl T.M."/>
            <person name="Potier S."/>
            <person name="Proft M."/>
            <person name="Purnelle B."/>
            <person name="Ramezani Rad M."/>
            <person name="Rieger M."/>
            <person name="Rose M."/>
            <person name="Schaaff-Gerstenschlaeger I."/>
            <person name="Scherens B."/>
            <person name="Schwarzlose C."/>
            <person name="Skala J."/>
            <person name="Slonimski P.P."/>
            <person name="Smits P.H.M."/>
            <person name="Souciet J.-L."/>
            <person name="Steensma H.Y."/>
            <person name="Stucka R."/>
            <person name="Urrestarazu L.A."/>
            <person name="van der Aart Q.J.M."/>
            <person name="Van Dyck L."/>
            <person name="Vassarotti A."/>
            <person name="Vetter I."/>
            <person name="Vierendeels F."/>
            <person name="Vissers S."/>
            <person name="Wagner G."/>
            <person name="de Wergifosse P."/>
            <person name="Wolfe K.H."/>
            <person name="Zagulski M."/>
            <person name="Zimmermann F.K."/>
            <person name="Mewes H.-W."/>
            <person name="Kleine K."/>
        </authorList>
    </citation>
    <scope>NUCLEOTIDE SEQUENCE [LARGE SCALE GENOMIC DNA]</scope>
    <source>
        <strain>ATCC 204508 / S288c</strain>
    </source>
</reference>
<reference key="2">
    <citation type="journal article" date="2014" name="G3 (Bethesda)">
        <title>The reference genome sequence of Saccharomyces cerevisiae: Then and now.</title>
        <authorList>
            <person name="Engel S.R."/>
            <person name="Dietrich F.S."/>
            <person name="Fisk D.G."/>
            <person name="Binkley G."/>
            <person name="Balakrishnan R."/>
            <person name="Costanzo M.C."/>
            <person name="Dwight S.S."/>
            <person name="Hitz B.C."/>
            <person name="Karra K."/>
            <person name="Nash R.S."/>
            <person name="Weng S."/>
            <person name="Wong E.D."/>
            <person name="Lloyd P."/>
            <person name="Skrzypek M.S."/>
            <person name="Miyasato S.R."/>
            <person name="Simison M."/>
            <person name="Cherry J.M."/>
        </authorList>
    </citation>
    <scope>GENOME REANNOTATION</scope>
    <source>
        <strain>ATCC 204508 / S288c</strain>
    </source>
</reference>
<reference key="3">
    <citation type="journal article" date="2002" name="Genome Res.">
        <title>Parallel identification of new genes in Saccharomyces cerevisiae.</title>
        <authorList>
            <person name="Oshiro G."/>
            <person name="Wodicka L.M."/>
            <person name="Washburn M.P."/>
            <person name="Yates J.R. III"/>
            <person name="Lockhart D.J."/>
            <person name="Winzeler E.A."/>
        </authorList>
    </citation>
    <scope>IDENTIFICATION BY MASS SPECTROMETRY</scope>
</reference>
<proteinExistence type="evidence at protein level"/>
<protein>
    <recommendedName>
        <fullName>Uncharacterized protein YBR221W-A</fullName>
    </recommendedName>
</protein>
<gene>
    <name type="ordered locus">YBR221W-A</name>
</gene>